<proteinExistence type="inferred from homology"/>
<dbReference type="EC" id="1.2.1.38" evidence="1"/>
<dbReference type="EMBL" id="CP000667">
    <property type="protein sequence ID" value="ABP54350.1"/>
    <property type="molecule type" value="Genomic_DNA"/>
</dbReference>
<dbReference type="RefSeq" id="WP_011905780.1">
    <property type="nucleotide sequence ID" value="NC_009380.1"/>
</dbReference>
<dbReference type="SMR" id="A4X650"/>
<dbReference type="STRING" id="369723.Strop_1888"/>
<dbReference type="KEGG" id="stp:Strop_1888"/>
<dbReference type="PATRIC" id="fig|369723.5.peg.1936"/>
<dbReference type="eggNOG" id="COG0002">
    <property type="taxonomic scope" value="Bacteria"/>
</dbReference>
<dbReference type="HOGENOM" id="CLU_006384_0_0_11"/>
<dbReference type="UniPathway" id="UPA00068">
    <property type="reaction ID" value="UER00108"/>
</dbReference>
<dbReference type="Proteomes" id="UP000000235">
    <property type="component" value="Chromosome"/>
</dbReference>
<dbReference type="GO" id="GO:0005737">
    <property type="term" value="C:cytoplasm"/>
    <property type="evidence" value="ECO:0007669"/>
    <property type="project" value="UniProtKB-SubCell"/>
</dbReference>
<dbReference type="GO" id="GO:0003942">
    <property type="term" value="F:N-acetyl-gamma-glutamyl-phosphate reductase activity"/>
    <property type="evidence" value="ECO:0007669"/>
    <property type="project" value="UniProtKB-UniRule"/>
</dbReference>
<dbReference type="GO" id="GO:0051287">
    <property type="term" value="F:NAD binding"/>
    <property type="evidence" value="ECO:0007669"/>
    <property type="project" value="InterPro"/>
</dbReference>
<dbReference type="GO" id="GO:0070401">
    <property type="term" value="F:NADP+ binding"/>
    <property type="evidence" value="ECO:0007669"/>
    <property type="project" value="InterPro"/>
</dbReference>
<dbReference type="GO" id="GO:0006526">
    <property type="term" value="P:L-arginine biosynthetic process"/>
    <property type="evidence" value="ECO:0007669"/>
    <property type="project" value="UniProtKB-UniRule"/>
</dbReference>
<dbReference type="CDD" id="cd24148">
    <property type="entry name" value="AGPR_1_actinobacAGPR_like"/>
    <property type="match status" value="1"/>
</dbReference>
<dbReference type="CDD" id="cd23934">
    <property type="entry name" value="AGPR_1_C"/>
    <property type="match status" value="1"/>
</dbReference>
<dbReference type="Gene3D" id="3.30.360.10">
    <property type="entry name" value="Dihydrodipicolinate Reductase, domain 2"/>
    <property type="match status" value="1"/>
</dbReference>
<dbReference type="Gene3D" id="3.40.50.720">
    <property type="entry name" value="NAD(P)-binding Rossmann-like Domain"/>
    <property type="match status" value="1"/>
</dbReference>
<dbReference type="HAMAP" id="MF_00150">
    <property type="entry name" value="ArgC_type1"/>
    <property type="match status" value="1"/>
</dbReference>
<dbReference type="InterPro" id="IPR000706">
    <property type="entry name" value="AGPR_type-1"/>
</dbReference>
<dbReference type="InterPro" id="IPR036291">
    <property type="entry name" value="NAD(P)-bd_dom_sf"/>
</dbReference>
<dbReference type="InterPro" id="IPR050085">
    <property type="entry name" value="NAGSA_dehydrogenase"/>
</dbReference>
<dbReference type="InterPro" id="IPR000534">
    <property type="entry name" value="Semialdehyde_DH_NAD-bd"/>
</dbReference>
<dbReference type="NCBIfam" id="TIGR01850">
    <property type="entry name" value="argC"/>
    <property type="match status" value="1"/>
</dbReference>
<dbReference type="PANTHER" id="PTHR32338:SF10">
    <property type="entry name" value="N-ACETYL-GAMMA-GLUTAMYL-PHOSPHATE REDUCTASE, CHLOROPLASTIC-RELATED"/>
    <property type="match status" value="1"/>
</dbReference>
<dbReference type="PANTHER" id="PTHR32338">
    <property type="entry name" value="N-ACETYL-GAMMA-GLUTAMYL-PHOSPHATE REDUCTASE, CHLOROPLASTIC-RELATED-RELATED"/>
    <property type="match status" value="1"/>
</dbReference>
<dbReference type="Pfam" id="PF01118">
    <property type="entry name" value="Semialdhyde_dh"/>
    <property type="match status" value="1"/>
</dbReference>
<dbReference type="Pfam" id="PF22698">
    <property type="entry name" value="Semialdhyde_dhC_1"/>
    <property type="match status" value="1"/>
</dbReference>
<dbReference type="SMART" id="SM00859">
    <property type="entry name" value="Semialdhyde_dh"/>
    <property type="match status" value="1"/>
</dbReference>
<dbReference type="SUPFAM" id="SSF55347">
    <property type="entry name" value="Glyceraldehyde-3-phosphate dehydrogenase-like, C-terminal domain"/>
    <property type="match status" value="1"/>
</dbReference>
<dbReference type="SUPFAM" id="SSF51735">
    <property type="entry name" value="NAD(P)-binding Rossmann-fold domains"/>
    <property type="match status" value="1"/>
</dbReference>
<organism>
    <name type="scientific">Salinispora tropica (strain ATCC BAA-916 / DSM 44818 / JCM 13857 / NBRC 105044 / CNB-440)</name>
    <dbReference type="NCBI Taxonomy" id="369723"/>
    <lineage>
        <taxon>Bacteria</taxon>
        <taxon>Bacillati</taxon>
        <taxon>Actinomycetota</taxon>
        <taxon>Actinomycetes</taxon>
        <taxon>Micromonosporales</taxon>
        <taxon>Micromonosporaceae</taxon>
        <taxon>Salinispora</taxon>
    </lineage>
</organism>
<evidence type="ECO:0000255" key="1">
    <source>
        <dbReference type="HAMAP-Rule" id="MF_00150"/>
    </source>
</evidence>
<protein>
    <recommendedName>
        <fullName evidence="1">N-acetyl-gamma-glutamyl-phosphate reductase</fullName>
        <shortName evidence="1">AGPR</shortName>
        <ecNumber evidence="1">1.2.1.38</ecNumber>
    </recommendedName>
    <alternativeName>
        <fullName evidence="1">N-acetyl-glutamate semialdehyde dehydrogenase</fullName>
        <shortName evidence="1">NAGSA dehydrogenase</shortName>
    </alternativeName>
</protein>
<feature type="chain" id="PRO_1000076742" description="N-acetyl-gamma-glutamyl-phosphate reductase">
    <location>
        <begin position="1"/>
        <end position="333"/>
    </location>
</feature>
<feature type="active site" evidence="1">
    <location>
        <position position="145"/>
    </location>
</feature>
<reference key="1">
    <citation type="journal article" date="2007" name="Proc. Natl. Acad. Sci. U.S.A.">
        <title>Genome sequencing reveals complex secondary metabolome in the marine actinomycete Salinispora tropica.</title>
        <authorList>
            <person name="Udwary D.W."/>
            <person name="Zeigler L."/>
            <person name="Asolkar R.N."/>
            <person name="Singan V."/>
            <person name="Lapidus A."/>
            <person name="Fenical W."/>
            <person name="Jensen P.R."/>
            <person name="Moore B.S."/>
        </authorList>
    </citation>
    <scope>NUCLEOTIDE SEQUENCE [LARGE SCALE GENOMIC DNA]</scope>
    <source>
        <strain>ATCC BAA-916 / DSM 44818 / JCM 13857 / NBRC 105044 / CNB-440</strain>
    </source>
</reference>
<accession>A4X650</accession>
<gene>
    <name evidence="1" type="primary">argC</name>
    <name type="ordered locus">Strop_1888</name>
</gene>
<name>ARGC_SALTO</name>
<comment type="function">
    <text evidence="1">Catalyzes the NADPH-dependent reduction of N-acetyl-5-glutamyl phosphate to yield N-acetyl-L-glutamate 5-semialdehyde.</text>
</comment>
<comment type="catalytic activity">
    <reaction evidence="1">
        <text>N-acetyl-L-glutamate 5-semialdehyde + phosphate + NADP(+) = N-acetyl-L-glutamyl 5-phosphate + NADPH + H(+)</text>
        <dbReference type="Rhea" id="RHEA:21588"/>
        <dbReference type="ChEBI" id="CHEBI:15378"/>
        <dbReference type="ChEBI" id="CHEBI:29123"/>
        <dbReference type="ChEBI" id="CHEBI:43474"/>
        <dbReference type="ChEBI" id="CHEBI:57783"/>
        <dbReference type="ChEBI" id="CHEBI:57936"/>
        <dbReference type="ChEBI" id="CHEBI:58349"/>
        <dbReference type="EC" id="1.2.1.38"/>
    </reaction>
</comment>
<comment type="pathway">
    <text evidence="1">Amino-acid biosynthesis; L-arginine biosynthesis; N(2)-acetyl-L-ornithine from L-glutamate: step 3/4.</text>
</comment>
<comment type="subcellular location">
    <subcellularLocation>
        <location evidence="1">Cytoplasm</location>
    </subcellularLocation>
</comment>
<comment type="similarity">
    <text evidence="1">Belongs to the NAGSA dehydrogenase family. Type 1 subfamily.</text>
</comment>
<keyword id="KW-0028">Amino-acid biosynthesis</keyword>
<keyword id="KW-0055">Arginine biosynthesis</keyword>
<keyword id="KW-0963">Cytoplasm</keyword>
<keyword id="KW-0521">NADP</keyword>
<keyword id="KW-0560">Oxidoreductase</keyword>
<keyword id="KW-1185">Reference proteome</keyword>
<sequence>MGIRVAVAGASGYAGGELLRLITGHPEFDLVAATAHSQAGHRLDTVHPQLTGLELVLAETDPAALADADLVFLALPHGESATLAAQLPPKVRVVDLGADHRLADPYAWANYYGGTHAGQWTYGLPELPGQRERIAATTRVANPGCYASAIVLALAPLIAAGAAQPADVVVVAASGASGAGRAAKAHLIAGEVMGDLSPYRVGAHQHVPEIKQATGATSLSFTPVLAPMPRGILATVTAVPVRDVDPQAVLAEAYADAPFVHVLPEGRWPHTAATLGSNSCHLQATVDVDAGRLIVVSGLDNLGRGAAGQAVQNANIMLGLPETTGLSVWGVSP</sequence>